<evidence type="ECO:0000250" key="1"/>
<evidence type="ECO:0000305" key="2"/>
<proteinExistence type="inferred from homology"/>
<name>RPOZ_CAUVC</name>
<protein>
    <recommendedName>
        <fullName>DNA-directed RNA polymerase subunit omega</fullName>
        <shortName>RNAP omega subunit</shortName>
        <ecNumber>2.7.7.6</ecNumber>
    </recommendedName>
    <alternativeName>
        <fullName>RNA polymerase omega subunit</fullName>
    </alternativeName>
    <alternativeName>
        <fullName>Transcriptase subunit omega</fullName>
    </alternativeName>
</protein>
<gene>
    <name type="primary">rpoZ</name>
    <name type="ordered locus">CC_1552</name>
</gene>
<keyword id="KW-0240">DNA-directed RNA polymerase</keyword>
<keyword id="KW-0548">Nucleotidyltransferase</keyword>
<keyword id="KW-1185">Reference proteome</keyword>
<keyword id="KW-0804">Transcription</keyword>
<keyword id="KW-0808">Transferase</keyword>
<organism>
    <name type="scientific">Caulobacter vibrioides (strain ATCC 19089 / CIP 103742 / CB 15)</name>
    <name type="common">Caulobacter crescentus</name>
    <dbReference type="NCBI Taxonomy" id="190650"/>
    <lineage>
        <taxon>Bacteria</taxon>
        <taxon>Pseudomonadati</taxon>
        <taxon>Pseudomonadota</taxon>
        <taxon>Alphaproteobacteria</taxon>
        <taxon>Caulobacterales</taxon>
        <taxon>Caulobacteraceae</taxon>
        <taxon>Caulobacter</taxon>
    </lineage>
</organism>
<feature type="chain" id="PRO_0000128925" description="DNA-directed RNA polymerase subunit omega">
    <location>
        <begin position="1"/>
        <end position="119"/>
    </location>
</feature>
<comment type="function">
    <text evidence="1">Promotes RNA polymerase assembly. Latches the N- and C-terminal regions of the beta' subunit thereby facilitating its interaction with the beta and alpha subunits (By similarity).</text>
</comment>
<comment type="catalytic activity">
    <reaction>
        <text>RNA(n) + a ribonucleoside 5'-triphosphate = RNA(n+1) + diphosphate</text>
        <dbReference type="Rhea" id="RHEA:21248"/>
        <dbReference type="Rhea" id="RHEA-COMP:14527"/>
        <dbReference type="Rhea" id="RHEA-COMP:17342"/>
        <dbReference type="ChEBI" id="CHEBI:33019"/>
        <dbReference type="ChEBI" id="CHEBI:61557"/>
        <dbReference type="ChEBI" id="CHEBI:140395"/>
        <dbReference type="EC" id="2.7.7.6"/>
    </reaction>
</comment>
<comment type="subunit">
    <text evidence="1">The RNAP catalytic core consists of 2 alpha, 1 beta, 1 beta' and 1 omega subunit. When a sigma factor is associated with the core the holoenzyme is formed, which can initiate transcription (By similarity).</text>
</comment>
<comment type="similarity">
    <text evidence="2">Belongs to the RNA polymerase subunit omega family.</text>
</comment>
<dbReference type="EC" id="2.7.7.6"/>
<dbReference type="EMBL" id="AE005673">
    <property type="protein sequence ID" value="AAK23531.1"/>
    <property type="molecule type" value="Genomic_DNA"/>
</dbReference>
<dbReference type="PIR" id="G87441">
    <property type="entry name" value="G87441"/>
</dbReference>
<dbReference type="RefSeq" id="NP_420363.1">
    <property type="nucleotide sequence ID" value="NC_002696.2"/>
</dbReference>
<dbReference type="RefSeq" id="WP_010919426.1">
    <property type="nucleotide sequence ID" value="NC_002696.2"/>
</dbReference>
<dbReference type="SMR" id="P58066"/>
<dbReference type="STRING" id="190650.CC_1552"/>
<dbReference type="EnsemblBacteria" id="AAK23531">
    <property type="protein sequence ID" value="AAK23531"/>
    <property type="gene ID" value="CC_1552"/>
</dbReference>
<dbReference type="KEGG" id="ccr:CC_1552"/>
<dbReference type="PATRIC" id="fig|190650.5.peg.1580"/>
<dbReference type="eggNOG" id="COG1758">
    <property type="taxonomic scope" value="Bacteria"/>
</dbReference>
<dbReference type="HOGENOM" id="CLU_125406_2_0_5"/>
<dbReference type="BioCyc" id="CAULO:CC1552-MONOMER"/>
<dbReference type="Proteomes" id="UP000001816">
    <property type="component" value="Chromosome"/>
</dbReference>
<dbReference type="GO" id="GO:0000428">
    <property type="term" value="C:DNA-directed RNA polymerase complex"/>
    <property type="evidence" value="ECO:0007669"/>
    <property type="project" value="UniProtKB-KW"/>
</dbReference>
<dbReference type="GO" id="GO:0003677">
    <property type="term" value="F:DNA binding"/>
    <property type="evidence" value="ECO:0007669"/>
    <property type="project" value="UniProtKB-UniRule"/>
</dbReference>
<dbReference type="GO" id="GO:0003899">
    <property type="term" value="F:DNA-directed RNA polymerase activity"/>
    <property type="evidence" value="ECO:0007669"/>
    <property type="project" value="UniProtKB-UniRule"/>
</dbReference>
<dbReference type="GO" id="GO:0006351">
    <property type="term" value="P:DNA-templated transcription"/>
    <property type="evidence" value="ECO:0007669"/>
    <property type="project" value="UniProtKB-UniRule"/>
</dbReference>
<dbReference type="Gene3D" id="3.90.940.10">
    <property type="match status" value="1"/>
</dbReference>
<dbReference type="HAMAP" id="MF_00366">
    <property type="entry name" value="RNApol_bact_RpoZ"/>
    <property type="match status" value="1"/>
</dbReference>
<dbReference type="InterPro" id="IPR003716">
    <property type="entry name" value="DNA-dir_RNA_pol_omega"/>
</dbReference>
<dbReference type="InterPro" id="IPR006110">
    <property type="entry name" value="Pol_omega/Rpo6/RPB6"/>
</dbReference>
<dbReference type="InterPro" id="IPR036161">
    <property type="entry name" value="RPB6/omega-like_sf"/>
</dbReference>
<dbReference type="NCBIfam" id="TIGR00690">
    <property type="entry name" value="rpoZ"/>
    <property type="match status" value="1"/>
</dbReference>
<dbReference type="PANTHER" id="PTHR34476">
    <property type="entry name" value="DNA-DIRECTED RNA POLYMERASE SUBUNIT OMEGA"/>
    <property type="match status" value="1"/>
</dbReference>
<dbReference type="PANTHER" id="PTHR34476:SF1">
    <property type="entry name" value="DNA-DIRECTED RNA POLYMERASE SUBUNIT OMEGA"/>
    <property type="match status" value="1"/>
</dbReference>
<dbReference type="Pfam" id="PF01192">
    <property type="entry name" value="RNA_pol_Rpb6"/>
    <property type="match status" value="1"/>
</dbReference>
<dbReference type="SMART" id="SM01409">
    <property type="entry name" value="RNA_pol_Rpb6"/>
    <property type="match status" value="1"/>
</dbReference>
<dbReference type="SUPFAM" id="SSF63562">
    <property type="entry name" value="RPB6/omega subunit-like"/>
    <property type="match status" value="1"/>
</dbReference>
<sequence>MARVTVEDCVEKVPNRFALVLLSAHRARGISAGAALMVDRDNDKNPVVALREIADDVIDHEGLKEHLISTLQRVDEHTEAEEEAETLALLADPSHMQMSELELVRALQSDRDGGQEERY</sequence>
<accession>P58066</accession>
<reference key="1">
    <citation type="journal article" date="2001" name="Proc. Natl. Acad. Sci. U.S.A.">
        <title>Complete genome sequence of Caulobacter crescentus.</title>
        <authorList>
            <person name="Nierman W.C."/>
            <person name="Feldblyum T.V."/>
            <person name="Laub M.T."/>
            <person name="Paulsen I.T."/>
            <person name="Nelson K.E."/>
            <person name="Eisen J.A."/>
            <person name="Heidelberg J.F."/>
            <person name="Alley M.R.K."/>
            <person name="Ohta N."/>
            <person name="Maddock J.R."/>
            <person name="Potocka I."/>
            <person name="Nelson W.C."/>
            <person name="Newton A."/>
            <person name="Stephens C."/>
            <person name="Phadke N.D."/>
            <person name="Ely B."/>
            <person name="DeBoy R.T."/>
            <person name="Dodson R.J."/>
            <person name="Durkin A.S."/>
            <person name="Gwinn M.L."/>
            <person name="Haft D.H."/>
            <person name="Kolonay J.F."/>
            <person name="Smit J."/>
            <person name="Craven M.B."/>
            <person name="Khouri H.M."/>
            <person name="Shetty J."/>
            <person name="Berry K.J."/>
            <person name="Utterback T.R."/>
            <person name="Tran K."/>
            <person name="Wolf A.M."/>
            <person name="Vamathevan J.J."/>
            <person name="Ermolaeva M.D."/>
            <person name="White O."/>
            <person name="Salzberg S.L."/>
            <person name="Venter J.C."/>
            <person name="Shapiro L."/>
            <person name="Fraser C.M."/>
        </authorList>
    </citation>
    <scope>NUCLEOTIDE SEQUENCE [LARGE SCALE GENOMIC DNA]</scope>
    <source>
        <strain>ATCC 19089 / CIP 103742 / CB 15</strain>
    </source>
</reference>